<comment type="function">
    <text evidence="1">Involved in peptide bond synthesis. Stimulates efficient translation and peptide-bond synthesis on native or reconstituted 70S ribosomes in vitro. Probably functions indirectly by altering the affinity of the ribosome for aminoacyl-tRNA, thus increasing their reactivity as acceptors for peptidyl transferase.</text>
</comment>
<comment type="pathway">
    <text evidence="1">Protein biosynthesis; polypeptide chain elongation.</text>
</comment>
<comment type="subcellular location">
    <subcellularLocation>
        <location evidence="1">Cytoplasm</location>
    </subcellularLocation>
</comment>
<comment type="similarity">
    <text evidence="1">Belongs to the elongation factor P family.</text>
</comment>
<accession>B1XKV1</accession>
<dbReference type="EMBL" id="CP000951">
    <property type="protein sequence ID" value="ACA98070.1"/>
    <property type="molecule type" value="Genomic_DNA"/>
</dbReference>
<dbReference type="RefSeq" id="WP_012305694.1">
    <property type="nucleotide sequence ID" value="NZ_JAHHPU010000005.1"/>
</dbReference>
<dbReference type="SMR" id="B1XKV1"/>
<dbReference type="STRING" id="32049.SYNPCC7002_A0053"/>
<dbReference type="KEGG" id="syp:SYNPCC7002_A0053"/>
<dbReference type="eggNOG" id="COG0231">
    <property type="taxonomic scope" value="Bacteria"/>
</dbReference>
<dbReference type="HOGENOM" id="CLU_074944_0_1_3"/>
<dbReference type="UniPathway" id="UPA00345"/>
<dbReference type="Proteomes" id="UP000001688">
    <property type="component" value="Chromosome"/>
</dbReference>
<dbReference type="GO" id="GO:0005737">
    <property type="term" value="C:cytoplasm"/>
    <property type="evidence" value="ECO:0007669"/>
    <property type="project" value="UniProtKB-SubCell"/>
</dbReference>
<dbReference type="GO" id="GO:0003746">
    <property type="term" value="F:translation elongation factor activity"/>
    <property type="evidence" value="ECO:0007669"/>
    <property type="project" value="UniProtKB-UniRule"/>
</dbReference>
<dbReference type="GO" id="GO:0043043">
    <property type="term" value="P:peptide biosynthetic process"/>
    <property type="evidence" value="ECO:0007669"/>
    <property type="project" value="InterPro"/>
</dbReference>
<dbReference type="CDD" id="cd04470">
    <property type="entry name" value="S1_EF-P_repeat_1"/>
    <property type="match status" value="1"/>
</dbReference>
<dbReference type="CDD" id="cd05794">
    <property type="entry name" value="S1_EF-P_repeat_2"/>
    <property type="match status" value="1"/>
</dbReference>
<dbReference type="FunFam" id="2.30.30.30:FF:000003">
    <property type="entry name" value="Elongation factor P"/>
    <property type="match status" value="1"/>
</dbReference>
<dbReference type="FunFam" id="2.40.50.140:FF:000004">
    <property type="entry name" value="Elongation factor P"/>
    <property type="match status" value="1"/>
</dbReference>
<dbReference type="FunFam" id="2.40.50.140:FF:000009">
    <property type="entry name" value="Elongation factor P"/>
    <property type="match status" value="1"/>
</dbReference>
<dbReference type="Gene3D" id="2.30.30.30">
    <property type="match status" value="1"/>
</dbReference>
<dbReference type="Gene3D" id="2.40.50.140">
    <property type="entry name" value="Nucleic acid-binding proteins"/>
    <property type="match status" value="2"/>
</dbReference>
<dbReference type="HAMAP" id="MF_00141">
    <property type="entry name" value="EF_P"/>
    <property type="match status" value="1"/>
</dbReference>
<dbReference type="InterPro" id="IPR015365">
    <property type="entry name" value="Elong-fact-P_C"/>
</dbReference>
<dbReference type="InterPro" id="IPR012340">
    <property type="entry name" value="NA-bd_OB-fold"/>
</dbReference>
<dbReference type="InterPro" id="IPR014722">
    <property type="entry name" value="Rib_uL2_dom2"/>
</dbReference>
<dbReference type="InterPro" id="IPR020599">
    <property type="entry name" value="Transl_elong_fac_P/YeiP"/>
</dbReference>
<dbReference type="InterPro" id="IPR013185">
    <property type="entry name" value="Transl_elong_KOW-like"/>
</dbReference>
<dbReference type="InterPro" id="IPR001059">
    <property type="entry name" value="Transl_elong_P/YeiP_cen"/>
</dbReference>
<dbReference type="InterPro" id="IPR013852">
    <property type="entry name" value="Transl_elong_P/YeiP_CS"/>
</dbReference>
<dbReference type="InterPro" id="IPR011768">
    <property type="entry name" value="Transl_elongation_fac_P"/>
</dbReference>
<dbReference type="InterPro" id="IPR008991">
    <property type="entry name" value="Translation_prot_SH3-like_sf"/>
</dbReference>
<dbReference type="NCBIfam" id="TIGR00038">
    <property type="entry name" value="efp"/>
    <property type="match status" value="1"/>
</dbReference>
<dbReference type="NCBIfam" id="NF001810">
    <property type="entry name" value="PRK00529.1"/>
    <property type="match status" value="1"/>
</dbReference>
<dbReference type="PANTHER" id="PTHR30053">
    <property type="entry name" value="ELONGATION FACTOR P"/>
    <property type="match status" value="1"/>
</dbReference>
<dbReference type="PANTHER" id="PTHR30053:SF12">
    <property type="entry name" value="ELONGATION FACTOR P (EF-P) FAMILY PROTEIN"/>
    <property type="match status" value="1"/>
</dbReference>
<dbReference type="Pfam" id="PF01132">
    <property type="entry name" value="EFP"/>
    <property type="match status" value="1"/>
</dbReference>
<dbReference type="Pfam" id="PF08207">
    <property type="entry name" value="EFP_N"/>
    <property type="match status" value="1"/>
</dbReference>
<dbReference type="Pfam" id="PF09285">
    <property type="entry name" value="Elong-fact-P_C"/>
    <property type="match status" value="1"/>
</dbReference>
<dbReference type="PIRSF" id="PIRSF005901">
    <property type="entry name" value="EF-P"/>
    <property type="match status" value="1"/>
</dbReference>
<dbReference type="SMART" id="SM01185">
    <property type="entry name" value="EFP"/>
    <property type="match status" value="1"/>
</dbReference>
<dbReference type="SMART" id="SM00841">
    <property type="entry name" value="Elong-fact-P_C"/>
    <property type="match status" value="1"/>
</dbReference>
<dbReference type="SUPFAM" id="SSF50249">
    <property type="entry name" value="Nucleic acid-binding proteins"/>
    <property type="match status" value="2"/>
</dbReference>
<dbReference type="SUPFAM" id="SSF50104">
    <property type="entry name" value="Translation proteins SH3-like domain"/>
    <property type="match status" value="1"/>
</dbReference>
<dbReference type="PROSITE" id="PS01275">
    <property type="entry name" value="EFP"/>
    <property type="match status" value="1"/>
</dbReference>
<evidence type="ECO:0000255" key="1">
    <source>
        <dbReference type="HAMAP-Rule" id="MF_00141"/>
    </source>
</evidence>
<organism>
    <name type="scientific">Picosynechococcus sp. (strain ATCC 27264 / PCC 7002 / PR-6)</name>
    <name type="common">Agmenellum quadruplicatum</name>
    <dbReference type="NCBI Taxonomy" id="32049"/>
    <lineage>
        <taxon>Bacteria</taxon>
        <taxon>Bacillati</taxon>
        <taxon>Cyanobacteriota</taxon>
        <taxon>Cyanophyceae</taxon>
        <taxon>Oscillatoriophycideae</taxon>
        <taxon>Chroococcales</taxon>
        <taxon>Geminocystaceae</taxon>
        <taxon>Picosynechococcus</taxon>
    </lineage>
</organism>
<gene>
    <name evidence="1" type="primary">efp</name>
    <name type="ordered locus">SYNPCC7002_A0053</name>
</gene>
<sequence>MISSNDFRTGTSIELDGSVWRVVEFLHVKPGKGSAFVRTKLKNAQTGSVVEKTFRAGETVPQAILDKRTMQHTYKEGEQFVFMDMETYEEVRLTEAQIGDRVKYLMEEMEVNVLFWNSQVIDVELPNTVVLEVTETDPGVKGDTATGGTKPAIVSTGAQVNVPLFISIGERIKIDTRTDTYLGRE</sequence>
<name>EFP_PICP2</name>
<proteinExistence type="inferred from homology"/>
<keyword id="KW-0963">Cytoplasm</keyword>
<keyword id="KW-0251">Elongation factor</keyword>
<keyword id="KW-0648">Protein biosynthesis</keyword>
<keyword id="KW-1185">Reference proteome</keyword>
<feature type="chain" id="PRO_1000096216" description="Elongation factor P">
    <location>
        <begin position="1"/>
        <end position="185"/>
    </location>
</feature>
<reference key="1">
    <citation type="submission" date="2008-02" db="EMBL/GenBank/DDBJ databases">
        <title>Complete sequence of Synechococcus sp. PCC 7002.</title>
        <authorList>
            <person name="Li T."/>
            <person name="Zhao J."/>
            <person name="Zhao C."/>
            <person name="Liu Z."/>
            <person name="Zhao F."/>
            <person name="Marquardt J."/>
            <person name="Nomura C.T."/>
            <person name="Persson S."/>
            <person name="Detter J.C."/>
            <person name="Richardson P.M."/>
            <person name="Lanz C."/>
            <person name="Schuster S.C."/>
            <person name="Wang J."/>
            <person name="Li S."/>
            <person name="Huang X."/>
            <person name="Cai T."/>
            <person name="Yu Z."/>
            <person name="Luo J."/>
            <person name="Zhao J."/>
            <person name="Bryant D.A."/>
        </authorList>
    </citation>
    <scope>NUCLEOTIDE SEQUENCE [LARGE SCALE GENOMIC DNA]</scope>
    <source>
        <strain>ATCC 27264 / PCC 7002 / PR-6</strain>
    </source>
</reference>
<protein>
    <recommendedName>
        <fullName evidence="1">Elongation factor P</fullName>
        <shortName evidence="1">EF-P</shortName>
    </recommendedName>
</protein>